<evidence type="ECO:0000255" key="1">
    <source>
        <dbReference type="HAMAP-Rule" id="MF_00588"/>
    </source>
</evidence>
<name>GATE_THEVO</name>
<comment type="function">
    <text evidence="1">Allows the formation of correctly charged Gln-tRNA(Gln) through the transamidation of misacylated Glu-tRNA(Gln) in organisms which lack glutaminyl-tRNA synthetase. The reaction takes place in the presence of glutamine and ATP through an activated gamma-phospho-Glu-tRNA(Gln). The GatDE system is specific for glutamate and does not act on aspartate.</text>
</comment>
<comment type="catalytic activity">
    <reaction evidence="1">
        <text>L-glutamyl-tRNA(Gln) + L-glutamine + ATP + H2O = L-glutaminyl-tRNA(Gln) + L-glutamate + ADP + phosphate + H(+)</text>
        <dbReference type="Rhea" id="RHEA:17521"/>
        <dbReference type="Rhea" id="RHEA-COMP:9681"/>
        <dbReference type="Rhea" id="RHEA-COMP:9684"/>
        <dbReference type="ChEBI" id="CHEBI:15377"/>
        <dbReference type="ChEBI" id="CHEBI:15378"/>
        <dbReference type="ChEBI" id="CHEBI:29985"/>
        <dbReference type="ChEBI" id="CHEBI:30616"/>
        <dbReference type="ChEBI" id="CHEBI:43474"/>
        <dbReference type="ChEBI" id="CHEBI:58359"/>
        <dbReference type="ChEBI" id="CHEBI:78520"/>
        <dbReference type="ChEBI" id="CHEBI:78521"/>
        <dbReference type="ChEBI" id="CHEBI:456216"/>
    </reaction>
</comment>
<comment type="subunit">
    <text evidence="1">Heterodimer of GatD and GatE.</text>
</comment>
<comment type="similarity">
    <text evidence="1">Belongs to the GatB/GatE family. GatE subfamily.</text>
</comment>
<reference key="1">
    <citation type="journal article" date="2000" name="Proc. Natl. Acad. Sci. U.S.A.">
        <title>Archaeal adaptation to higher temperatures revealed by genomic sequence of Thermoplasma volcanium.</title>
        <authorList>
            <person name="Kawashima T."/>
            <person name="Amano N."/>
            <person name="Koike H."/>
            <person name="Makino S."/>
            <person name="Higuchi S."/>
            <person name="Kawashima-Ohya Y."/>
            <person name="Watanabe K."/>
            <person name="Yamazaki M."/>
            <person name="Kanehori K."/>
            <person name="Kawamoto T."/>
            <person name="Nunoshiba T."/>
            <person name="Yamamoto Y."/>
            <person name="Aramaki H."/>
            <person name="Makino K."/>
            <person name="Suzuki M."/>
        </authorList>
    </citation>
    <scope>NUCLEOTIDE SEQUENCE [LARGE SCALE GENOMIC DNA]</scope>
    <source>
        <strain>ATCC 51530 / DSM 4299 / JCM 9571 / NBRC 15438 / GSS1</strain>
    </source>
</reference>
<protein>
    <recommendedName>
        <fullName evidence="1">Glutamyl-tRNA(Gln) amidotransferase subunit E</fullName>
        <shortName evidence="1">Glu-ADT subunit E</shortName>
        <ecNumber evidence="1">6.3.5.-</ecNumber>
    </recommendedName>
</protein>
<gene>
    <name evidence="1" type="primary">gatE</name>
    <name type="ordered locus">TV1141</name>
    <name type="ORF">TVG1166951</name>
</gene>
<sequence length="598" mass="67355">MTHRNIKIGLEIHFQLNTGKLFCRCPVETSGTEKYRFERHLHVSESEMGRIDAAAKYESERSRTFEYVVTDNSCLVECDEDPPKMPNEDAIATAISVARALNCDILDYITYMRKIVIDGSNTSGFQRTAIIGINGYIETSKGKVRISTVCLEEDAARKIEEKEGTVVYSLDRLGIPLIEISTEPDIIDEEHAVEVAKKIGYYVISTGKSRKAPDSVRQDVNFSMGFGRVEIKGVSKLSQIKEVLKYEIQRQDMLKKASDLIKLRGGFDRSRFYFIDVTDLLVNTSSKVVNSGLKTGRAYAALCTNLAGTLKSGEYRLGKELADLVRAYGLKGLLHSDELPGYGLKESDIQPIYDRLQKDELDGVIILLSPQEKIGIIEEEIANRIEKLISLDLSETRGPTEDSTVFLRPMPGKDRMYPETDIPVIAVSKDILQKSDKIKSVGFEDLVSSIITKYGISKQVAESLASDMKIQELEELSTYLDPRESARVLTQIIPYLEKKYAKKFDNNLIFVLVRLMSDRKFDRYQVEKALEILFSENKDPALIVSDERLIELTKDEICEIIDKLKKSGITITKANVVSVLKKNTDRIFDPSMAIECLG</sequence>
<dbReference type="EC" id="6.3.5.-" evidence="1"/>
<dbReference type="EMBL" id="BA000011">
    <property type="protein sequence ID" value="BAB60283.1"/>
    <property type="molecule type" value="Genomic_DNA"/>
</dbReference>
<dbReference type="RefSeq" id="WP_010917375.1">
    <property type="nucleotide sequence ID" value="NC_002689.2"/>
</dbReference>
<dbReference type="SMR" id="Q979L9"/>
<dbReference type="STRING" id="273116.gene:9381940"/>
<dbReference type="PaxDb" id="273116-14325379"/>
<dbReference type="GeneID" id="1441257"/>
<dbReference type="KEGG" id="tvo:TVG1166951"/>
<dbReference type="eggNOG" id="arCOG01719">
    <property type="taxonomic scope" value="Archaea"/>
</dbReference>
<dbReference type="HOGENOM" id="CLU_030702_0_0_2"/>
<dbReference type="OrthoDB" id="7316at2157"/>
<dbReference type="PhylomeDB" id="Q979L9"/>
<dbReference type="Proteomes" id="UP000001017">
    <property type="component" value="Chromosome"/>
</dbReference>
<dbReference type="GO" id="GO:0005737">
    <property type="term" value="C:cytoplasm"/>
    <property type="evidence" value="ECO:0007669"/>
    <property type="project" value="InterPro"/>
</dbReference>
<dbReference type="GO" id="GO:0004812">
    <property type="term" value="F:aminoacyl-tRNA ligase activity"/>
    <property type="evidence" value="ECO:0007669"/>
    <property type="project" value="InterPro"/>
</dbReference>
<dbReference type="GO" id="GO:0005524">
    <property type="term" value="F:ATP binding"/>
    <property type="evidence" value="ECO:0007669"/>
    <property type="project" value="UniProtKB-KW"/>
</dbReference>
<dbReference type="GO" id="GO:0050567">
    <property type="term" value="F:glutaminyl-tRNA synthase (glutamine-hydrolyzing) activity"/>
    <property type="evidence" value="ECO:0007669"/>
    <property type="project" value="UniProtKB-UniRule"/>
</dbReference>
<dbReference type="GO" id="GO:0070681">
    <property type="term" value="P:glutaminyl-tRNAGln biosynthesis via transamidation"/>
    <property type="evidence" value="ECO:0007669"/>
    <property type="project" value="TreeGrafter"/>
</dbReference>
<dbReference type="GO" id="GO:0006412">
    <property type="term" value="P:translation"/>
    <property type="evidence" value="ECO:0007669"/>
    <property type="project" value="UniProtKB-UniRule"/>
</dbReference>
<dbReference type="Gene3D" id="3.30.1360.30">
    <property type="entry name" value="GAD-like domain"/>
    <property type="match status" value="1"/>
</dbReference>
<dbReference type="HAMAP" id="MF_00588">
    <property type="entry name" value="GatE"/>
    <property type="match status" value="1"/>
</dbReference>
<dbReference type="InterPro" id="IPR017959">
    <property type="entry name" value="Asn/Gln-tRNA_amidoTrfase_suB/E"/>
</dbReference>
<dbReference type="InterPro" id="IPR006075">
    <property type="entry name" value="Asn/Gln-tRNA_Trfase_suB/E_cat"/>
</dbReference>
<dbReference type="InterPro" id="IPR004115">
    <property type="entry name" value="GAD-like_sf"/>
</dbReference>
<dbReference type="InterPro" id="IPR004414">
    <property type="entry name" value="GatE"/>
</dbReference>
<dbReference type="InterPro" id="IPR017958">
    <property type="entry name" value="Gln-tRNA_amidoTrfase_suB_CS"/>
</dbReference>
<dbReference type="InterPro" id="IPR014746">
    <property type="entry name" value="Gln_synth/guanido_kin_cat_dom"/>
</dbReference>
<dbReference type="NCBIfam" id="TIGR00134">
    <property type="entry name" value="gatE_arch"/>
    <property type="match status" value="1"/>
</dbReference>
<dbReference type="NCBIfam" id="NF003107">
    <property type="entry name" value="PRK04028.1"/>
    <property type="match status" value="1"/>
</dbReference>
<dbReference type="PANTHER" id="PTHR11659">
    <property type="entry name" value="GLUTAMYL-TRNA GLN AMIDOTRANSFERASE SUBUNIT B MITOCHONDRIAL AND PROKARYOTIC PET112-RELATED"/>
    <property type="match status" value="1"/>
</dbReference>
<dbReference type="PANTHER" id="PTHR11659:SF2">
    <property type="entry name" value="GLUTAMYL-TRNA(GLN) AMIDOTRANSFERASE SUBUNIT E"/>
    <property type="match status" value="1"/>
</dbReference>
<dbReference type="Pfam" id="PF02934">
    <property type="entry name" value="GatB_N"/>
    <property type="match status" value="1"/>
</dbReference>
<dbReference type="SUPFAM" id="SSF55261">
    <property type="entry name" value="GAD domain-like"/>
    <property type="match status" value="1"/>
</dbReference>
<dbReference type="SUPFAM" id="SSF55931">
    <property type="entry name" value="Glutamine synthetase/guanido kinase"/>
    <property type="match status" value="1"/>
</dbReference>
<dbReference type="PROSITE" id="PS01234">
    <property type="entry name" value="GATB"/>
    <property type="match status" value="1"/>
</dbReference>
<feature type="chain" id="PRO_0000140085" description="Glutamyl-tRNA(Gln) amidotransferase subunit E">
    <location>
        <begin position="1"/>
        <end position="598"/>
    </location>
</feature>
<proteinExistence type="inferred from homology"/>
<organism>
    <name type="scientific">Thermoplasma volcanium (strain ATCC 51530 / DSM 4299 / JCM 9571 / NBRC 15438 / GSS1)</name>
    <dbReference type="NCBI Taxonomy" id="273116"/>
    <lineage>
        <taxon>Archaea</taxon>
        <taxon>Methanobacteriati</taxon>
        <taxon>Thermoplasmatota</taxon>
        <taxon>Thermoplasmata</taxon>
        <taxon>Thermoplasmatales</taxon>
        <taxon>Thermoplasmataceae</taxon>
        <taxon>Thermoplasma</taxon>
    </lineage>
</organism>
<accession>Q979L9</accession>
<keyword id="KW-0067">ATP-binding</keyword>
<keyword id="KW-0436">Ligase</keyword>
<keyword id="KW-0547">Nucleotide-binding</keyword>
<keyword id="KW-0648">Protein biosynthesis</keyword>